<sequence>MEEELKSFVKVWGSAIISVSYCYYIPSKIKSGVHRLLSVLPVCVLFLVLPLFFVFTIFSSTTAFCLSILANFKLILFAFDKGPLLPLPANLFRFICFTCLPIKIQKNPNSQNHLPKWVFFCKAAIFGVLLNVHNYKSSLPPILLICLYPLHLYLVLDVLLTIVNALLTIILGCDLEPHFNEPYLATSLQDFWGRRWNLMVPAIFRPGVYHPMRSVCQPQMRSDWARFMGCWTTFFVSGLIHELVYFYINRETPTWEVTWFFVLQGVCTAMEKAVKRKTRWSLSPMLSRLITVGFLVVTGYFLFFRQIERSNMLERRATEASLIIDFVKHKLSNFLL</sequence>
<organism>
    <name type="scientific">Arabidopsis thaliana</name>
    <name type="common">Mouse-ear cress</name>
    <dbReference type="NCBI Taxonomy" id="3702"/>
    <lineage>
        <taxon>Eukaryota</taxon>
        <taxon>Viridiplantae</taxon>
        <taxon>Streptophyta</taxon>
        <taxon>Embryophyta</taxon>
        <taxon>Tracheophyta</taxon>
        <taxon>Spermatophyta</taxon>
        <taxon>Magnoliopsida</taxon>
        <taxon>eudicotyledons</taxon>
        <taxon>Gunneridae</taxon>
        <taxon>Pentapetalae</taxon>
        <taxon>rosids</taxon>
        <taxon>malvids</taxon>
        <taxon>Brassicales</taxon>
        <taxon>Brassicaceae</taxon>
        <taxon>Camelineae</taxon>
        <taxon>Arabidopsis</taxon>
    </lineage>
</organism>
<name>WAXS8_ARATH</name>
<keyword id="KW-0012">Acyltransferase</keyword>
<keyword id="KW-0444">Lipid biosynthesis</keyword>
<keyword id="KW-0443">Lipid metabolism</keyword>
<keyword id="KW-0472">Membrane</keyword>
<keyword id="KW-1185">Reference proteome</keyword>
<keyword id="KW-0808">Transferase</keyword>
<keyword id="KW-0812">Transmembrane</keyword>
<keyword id="KW-1133">Transmembrane helix</keyword>
<gene>
    <name type="ordered locus">At1g34520</name>
    <name type="ORF">F12K21.17</name>
</gene>
<dbReference type="EC" id="2.3.1.75"/>
<dbReference type="EMBL" id="AC023279">
    <property type="protein sequence ID" value="AAF79269.1"/>
    <property type="molecule type" value="Genomic_DNA"/>
</dbReference>
<dbReference type="EMBL" id="CP002684">
    <property type="protein sequence ID" value="AEE31722.1"/>
    <property type="molecule type" value="Genomic_DNA"/>
</dbReference>
<dbReference type="RefSeq" id="NP_174711.2">
    <property type="nucleotide sequence ID" value="NM_103174.3"/>
</dbReference>
<dbReference type="STRING" id="3702.Q9LNL1"/>
<dbReference type="PaxDb" id="3702-AT1G34520.1"/>
<dbReference type="EnsemblPlants" id="AT1G34520.1">
    <property type="protein sequence ID" value="AT1G34520.1"/>
    <property type="gene ID" value="AT1G34520"/>
</dbReference>
<dbReference type="GeneID" id="840354"/>
<dbReference type="Gramene" id="AT1G34520.1">
    <property type="protein sequence ID" value="AT1G34520.1"/>
    <property type="gene ID" value="AT1G34520"/>
</dbReference>
<dbReference type="KEGG" id="ath:AT1G34520"/>
<dbReference type="Araport" id="AT1G34520"/>
<dbReference type="TAIR" id="AT1G34520"/>
<dbReference type="eggNOG" id="ENOG502S7Z7">
    <property type="taxonomic scope" value="Eukaryota"/>
</dbReference>
<dbReference type="HOGENOM" id="CLU_045902_0_0_1"/>
<dbReference type="InParanoid" id="Q9LNL1"/>
<dbReference type="OMA" id="YINRETP"/>
<dbReference type="OrthoDB" id="1077582at2759"/>
<dbReference type="PhylomeDB" id="Q9LNL1"/>
<dbReference type="BioCyc" id="ARA:AT1G34520-MONOMER"/>
<dbReference type="BRENDA" id="2.3.1.75">
    <property type="organism ID" value="399"/>
</dbReference>
<dbReference type="PRO" id="PR:Q9LNL1"/>
<dbReference type="Proteomes" id="UP000006548">
    <property type="component" value="Chromosome 1"/>
</dbReference>
<dbReference type="ExpressionAtlas" id="Q9LNL1">
    <property type="expression patterns" value="baseline and differential"/>
</dbReference>
<dbReference type="GO" id="GO:0016020">
    <property type="term" value="C:membrane"/>
    <property type="evidence" value="ECO:0007669"/>
    <property type="project" value="UniProtKB-SubCell"/>
</dbReference>
<dbReference type="GO" id="GO:0047196">
    <property type="term" value="F:long-chain-alcohol O-fatty-acyltransferase activity"/>
    <property type="evidence" value="ECO:0007669"/>
    <property type="project" value="UniProtKB-EC"/>
</dbReference>
<dbReference type="GO" id="GO:0006629">
    <property type="term" value="P:lipid metabolic process"/>
    <property type="evidence" value="ECO:0007669"/>
    <property type="project" value="UniProtKB-KW"/>
</dbReference>
<dbReference type="InterPro" id="IPR044851">
    <property type="entry name" value="Wax_synthase"/>
</dbReference>
<dbReference type="InterPro" id="IPR032805">
    <property type="entry name" value="Wax_synthase_dom"/>
</dbReference>
<dbReference type="InterPro" id="IPR017088">
    <property type="entry name" value="Wax_synthase_Magnoliopsida"/>
</dbReference>
<dbReference type="PANTHER" id="PTHR31595:SF41">
    <property type="entry name" value="LONG-CHAIN-ALCOHOL O-FATTY-ACYLTRANSFERASE 10-RELATED"/>
    <property type="match status" value="1"/>
</dbReference>
<dbReference type="PANTHER" id="PTHR31595">
    <property type="entry name" value="LONG-CHAIN-ALCOHOL O-FATTY-ACYLTRANSFERASE 3-RELATED"/>
    <property type="match status" value="1"/>
</dbReference>
<dbReference type="Pfam" id="PF13813">
    <property type="entry name" value="MBOAT_2"/>
    <property type="match status" value="1"/>
</dbReference>
<dbReference type="PIRSF" id="PIRSF037006">
    <property type="entry name" value="Wax_synthase"/>
    <property type="match status" value="1"/>
</dbReference>
<evidence type="ECO:0000250" key="1"/>
<evidence type="ECO:0000255" key="2"/>
<evidence type="ECO:0000305" key="3"/>
<comment type="function">
    <text evidence="1">Catalyzes the final step in the synthesis of long-chain linear esters (waxes).</text>
</comment>
<comment type="catalytic activity">
    <reaction>
        <text>a long chain fatty alcohol + a fatty acyl-CoA = a wax ester + CoA</text>
        <dbReference type="Rhea" id="RHEA:38443"/>
        <dbReference type="ChEBI" id="CHEBI:10036"/>
        <dbReference type="ChEBI" id="CHEBI:17135"/>
        <dbReference type="ChEBI" id="CHEBI:57287"/>
        <dbReference type="ChEBI" id="CHEBI:77636"/>
        <dbReference type="EC" id="2.3.1.75"/>
    </reaction>
</comment>
<comment type="subcellular location">
    <subcellularLocation>
        <location evidence="3">Membrane</location>
        <topology evidence="3">Multi-pass membrane protein</topology>
    </subcellularLocation>
</comment>
<comment type="similarity">
    <text evidence="3">Belongs to the wax synthase family.</text>
</comment>
<accession>Q9LNL1</accession>
<protein>
    <recommendedName>
        <fullName>Probable long-chain-alcohol O-fatty-acyltransferase 8</fullName>
        <ecNumber>2.3.1.75</ecNumber>
    </recommendedName>
    <alternativeName>
        <fullName>Wax synthase 8</fullName>
    </alternativeName>
</protein>
<reference key="1">
    <citation type="journal article" date="2000" name="Nature">
        <title>Sequence and analysis of chromosome 1 of the plant Arabidopsis thaliana.</title>
        <authorList>
            <person name="Theologis A."/>
            <person name="Ecker J.R."/>
            <person name="Palm C.J."/>
            <person name="Federspiel N.A."/>
            <person name="Kaul S."/>
            <person name="White O."/>
            <person name="Alonso J."/>
            <person name="Altafi H."/>
            <person name="Araujo R."/>
            <person name="Bowman C.L."/>
            <person name="Brooks S.Y."/>
            <person name="Buehler E."/>
            <person name="Chan A."/>
            <person name="Chao Q."/>
            <person name="Chen H."/>
            <person name="Cheuk R.F."/>
            <person name="Chin C.W."/>
            <person name="Chung M.K."/>
            <person name="Conn L."/>
            <person name="Conway A.B."/>
            <person name="Conway A.R."/>
            <person name="Creasy T.H."/>
            <person name="Dewar K."/>
            <person name="Dunn P."/>
            <person name="Etgu P."/>
            <person name="Feldblyum T.V."/>
            <person name="Feng J.-D."/>
            <person name="Fong B."/>
            <person name="Fujii C.Y."/>
            <person name="Gill J.E."/>
            <person name="Goldsmith A.D."/>
            <person name="Haas B."/>
            <person name="Hansen N.F."/>
            <person name="Hughes B."/>
            <person name="Huizar L."/>
            <person name="Hunter J.L."/>
            <person name="Jenkins J."/>
            <person name="Johnson-Hopson C."/>
            <person name="Khan S."/>
            <person name="Khaykin E."/>
            <person name="Kim C.J."/>
            <person name="Koo H.L."/>
            <person name="Kremenetskaia I."/>
            <person name="Kurtz D.B."/>
            <person name="Kwan A."/>
            <person name="Lam B."/>
            <person name="Langin-Hooper S."/>
            <person name="Lee A."/>
            <person name="Lee J.M."/>
            <person name="Lenz C.A."/>
            <person name="Li J.H."/>
            <person name="Li Y.-P."/>
            <person name="Lin X."/>
            <person name="Liu S.X."/>
            <person name="Liu Z.A."/>
            <person name="Luros J.S."/>
            <person name="Maiti R."/>
            <person name="Marziali A."/>
            <person name="Militscher J."/>
            <person name="Miranda M."/>
            <person name="Nguyen M."/>
            <person name="Nierman W.C."/>
            <person name="Osborne B.I."/>
            <person name="Pai G."/>
            <person name="Peterson J."/>
            <person name="Pham P.K."/>
            <person name="Rizzo M."/>
            <person name="Rooney T."/>
            <person name="Rowley D."/>
            <person name="Sakano H."/>
            <person name="Salzberg S.L."/>
            <person name="Schwartz J.R."/>
            <person name="Shinn P."/>
            <person name="Southwick A.M."/>
            <person name="Sun H."/>
            <person name="Tallon L.J."/>
            <person name="Tambunga G."/>
            <person name="Toriumi M.J."/>
            <person name="Town C.D."/>
            <person name="Utterback T."/>
            <person name="Van Aken S."/>
            <person name="Vaysberg M."/>
            <person name="Vysotskaia V.S."/>
            <person name="Walker M."/>
            <person name="Wu D."/>
            <person name="Yu G."/>
            <person name="Fraser C.M."/>
            <person name="Venter J.C."/>
            <person name="Davis R.W."/>
        </authorList>
    </citation>
    <scope>NUCLEOTIDE SEQUENCE [LARGE SCALE GENOMIC DNA]</scope>
    <source>
        <strain>cv. Columbia</strain>
    </source>
</reference>
<reference key="2">
    <citation type="journal article" date="2017" name="Plant J.">
        <title>Araport11: a complete reannotation of the Arabidopsis thaliana reference genome.</title>
        <authorList>
            <person name="Cheng C.Y."/>
            <person name="Krishnakumar V."/>
            <person name="Chan A.P."/>
            <person name="Thibaud-Nissen F."/>
            <person name="Schobel S."/>
            <person name="Town C.D."/>
        </authorList>
    </citation>
    <scope>GENOME REANNOTATION</scope>
    <source>
        <strain>cv. Columbia</strain>
    </source>
</reference>
<feature type="chain" id="PRO_0000380684" description="Probable long-chain-alcohol O-fatty-acyltransferase 8">
    <location>
        <begin position="1"/>
        <end position="336"/>
    </location>
</feature>
<feature type="transmembrane region" description="Helical" evidence="2">
    <location>
        <begin position="7"/>
        <end position="27"/>
    </location>
</feature>
<feature type="transmembrane region" description="Helical" evidence="2">
    <location>
        <begin position="38"/>
        <end position="58"/>
    </location>
</feature>
<feature type="transmembrane region" description="Helical" evidence="2">
    <location>
        <begin position="59"/>
        <end position="79"/>
    </location>
</feature>
<feature type="transmembrane region" description="Helical" evidence="2">
    <location>
        <begin position="82"/>
        <end position="102"/>
    </location>
</feature>
<feature type="transmembrane region" description="Helical" evidence="2">
    <location>
        <begin position="117"/>
        <end position="135"/>
    </location>
</feature>
<feature type="transmembrane region" description="Helical" evidence="2">
    <location>
        <begin position="152"/>
        <end position="172"/>
    </location>
</feature>
<feature type="transmembrane region" description="Helical" evidence="2">
    <location>
        <begin position="228"/>
        <end position="248"/>
    </location>
</feature>
<feature type="transmembrane region" description="Helical" evidence="2">
    <location>
        <begin position="284"/>
        <end position="304"/>
    </location>
</feature>
<proteinExistence type="inferred from homology"/>